<keyword id="KW-0963">Cytoplasm</keyword>
<keyword id="KW-0206">Cytoskeleton</keyword>
<keyword id="KW-0342">GTP-binding</keyword>
<keyword id="KW-0460">Magnesium</keyword>
<keyword id="KW-0479">Metal-binding</keyword>
<keyword id="KW-0493">Microtubule</keyword>
<keyword id="KW-0547">Nucleotide-binding</keyword>
<name>TBB2_DROER</name>
<feature type="chain" id="PRO_0000048277" description="Tubulin beta-2 chain">
    <location>
        <begin position="1"/>
        <end position="446"/>
    </location>
</feature>
<feature type="region of interest" description="Disordered" evidence="3">
    <location>
        <begin position="424"/>
        <end position="446"/>
    </location>
</feature>
<feature type="compositionally biased region" description="Acidic residues" evidence="3">
    <location>
        <begin position="429"/>
        <end position="446"/>
    </location>
</feature>
<feature type="binding site" evidence="2">
    <location>
        <position position="11"/>
    </location>
    <ligand>
        <name>GTP</name>
        <dbReference type="ChEBI" id="CHEBI:37565"/>
    </ligand>
</feature>
<feature type="binding site" evidence="1">
    <location>
        <position position="69"/>
    </location>
    <ligand>
        <name>GTP</name>
        <dbReference type="ChEBI" id="CHEBI:37565"/>
    </ligand>
</feature>
<feature type="binding site" evidence="1">
    <location>
        <position position="69"/>
    </location>
    <ligand>
        <name>Mg(2+)</name>
        <dbReference type="ChEBI" id="CHEBI:18420"/>
    </ligand>
</feature>
<feature type="binding site" evidence="2">
    <location>
        <position position="138"/>
    </location>
    <ligand>
        <name>GTP</name>
        <dbReference type="ChEBI" id="CHEBI:37565"/>
    </ligand>
</feature>
<feature type="binding site" evidence="2">
    <location>
        <position position="142"/>
    </location>
    <ligand>
        <name>GTP</name>
        <dbReference type="ChEBI" id="CHEBI:37565"/>
    </ligand>
</feature>
<feature type="binding site" evidence="2">
    <location>
        <position position="143"/>
    </location>
    <ligand>
        <name>GTP</name>
        <dbReference type="ChEBI" id="CHEBI:37565"/>
    </ligand>
</feature>
<feature type="binding site" evidence="2">
    <location>
        <position position="144"/>
    </location>
    <ligand>
        <name>GTP</name>
        <dbReference type="ChEBI" id="CHEBI:37565"/>
    </ligand>
</feature>
<feature type="binding site" evidence="2">
    <location>
        <position position="204"/>
    </location>
    <ligand>
        <name>GTP</name>
        <dbReference type="ChEBI" id="CHEBI:37565"/>
    </ligand>
</feature>
<feature type="binding site" evidence="2">
    <location>
        <position position="226"/>
    </location>
    <ligand>
        <name>GTP</name>
        <dbReference type="ChEBI" id="CHEBI:37565"/>
    </ligand>
</feature>
<evidence type="ECO:0000250" key="1">
    <source>
        <dbReference type="UniProtKB" id="P68363"/>
    </source>
</evidence>
<evidence type="ECO:0000250" key="2">
    <source>
        <dbReference type="UniProtKB" id="Q13509"/>
    </source>
</evidence>
<evidence type="ECO:0000256" key="3">
    <source>
        <dbReference type="SAM" id="MobiDB-lite"/>
    </source>
</evidence>
<evidence type="ECO:0000305" key="4"/>
<sequence length="446" mass="49955">MREIVHIQAGQCGNQIGGKFWEVISDEHCIDATGTYYGDSDLQLERINVYYNEATGAKYVPRAILVDLEPGTMDSVRSGRFGQIFRPDNFVFGQSGAGNNWAKGHYTEGAELVDSVLDVVRKESEGCDCLQGFQLTHSLGGGTGSGMGTLLISKIREEYPDRIMNTFSVVPSPKVSDTVVEPYNATLSVHQLVENTDETYCIDNEALYDICFRTLKLTTPTYGDLNHLVSATMSGVTTCLRFPGQLNADLRKLAVNMVPFPRLHFFMPGFAPLTSRGSQQYRALTVPELTQQMFDAKNMMAACDPRHGRYLTVAAIFRGRMSMKEVDEQMLNIQNKNSSFFVEWIPNNCKTAVCDIPPRGLKMSATFIGNSTAIQELFKRVSEQFTAMFRRKAFLHWYTGEGMDEMEFTEAESNMNDLVSEYQQYQEATADEEGEFDEDEEGGGDE</sequence>
<accession>P83130</accession>
<dbReference type="EMBL" id="M16922">
    <property type="protein sequence ID" value="AAA28990.1"/>
    <property type="molecule type" value="Genomic_DNA"/>
</dbReference>
<dbReference type="SMR" id="P83130"/>
<dbReference type="eggNOG" id="KOG1375">
    <property type="taxonomic scope" value="Eukaryota"/>
</dbReference>
<dbReference type="OrthoDB" id="1662883at2759"/>
<dbReference type="GO" id="GO:0005737">
    <property type="term" value="C:cytoplasm"/>
    <property type="evidence" value="ECO:0007669"/>
    <property type="project" value="UniProtKB-KW"/>
</dbReference>
<dbReference type="GO" id="GO:0005874">
    <property type="term" value="C:microtubule"/>
    <property type="evidence" value="ECO:0007669"/>
    <property type="project" value="UniProtKB-KW"/>
</dbReference>
<dbReference type="GO" id="GO:0005525">
    <property type="term" value="F:GTP binding"/>
    <property type="evidence" value="ECO:0007669"/>
    <property type="project" value="UniProtKB-KW"/>
</dbReference>
<dbReference type="GO" id="GO:0003924">
    <property type="term" value="F:GTPase activity"/>
    <property type="evidence" value="ECO:0007669"/>
    <property type="project" value="InterPro"/>
</dbReference>
<dbReference type="GO" id="GO:0046872">
    <property type="term" value="F:metal ion binding"/>
    <property type="evidence" value="ECO:0007669"/>
    <property type="project" value="UniProtKB-KW"/>
</dbReference>
<dbReference type="GO" id="GO:0005200">
    <property type="term" value="F:structural constituent of cytoskeleton"/>
    <property type="evidence" value="ECO:0007669"/>
    <property type="project" value="InterPro"/>
</dbReference>
<dbReference type="GO" id="GO:0007017">
    <property type="term" value="P:microtubule-based process"/>
    <property type="evidence" value="ECO:0007669"/>
    <property type="project" value="InterPro"/>
</dbReference>
<dbReference type="GO" id="GO:0007435">
    <property type="term" value="P:salivary gland morphogenesis"/>
    <property type="evidence" value="ECO:0007669"/>
    <property type="project" value="EnsemblMetazoa"/>
</dbReference>
<dbReference type="CDD" id="cd02187">
    <property type="entry name" value="beta_tubulin"/>
    <property type="match status" value="1"/>
</dbReference>
<dbReference type="FunFam" id="1.10.287.600:FF:000006">
    <property type="entry name" value="Tubulin beta chain"/>
    <property type="match status" value="1"/>
</dbReference>
<dbReference type="FunFam" id="3.30.1330.20:FF:000002">
    <property type="entry name" value="Tubulin beta chain"/>
    <property type="match status" value="1"/>
</dbReference>
<dbReference type="FunFam" id="3.40.50.1440:FF:000003">
    <property type="entry name" value="Tubulin beta chain"/>
    <property type="match status" value="1"/>
</dbReference>
<dbReference type="Gene3D" id="1.10.287.600">
    <property type="entry name" value="Helix hairpin bin"/>
    <property type="match status" value="1"/>
</dbReference>
<dbReference type="Gene3D" id="3.30.1330.20">
    <property type="entry name" value="Tubulin/FtsZ, C-terminal domain"/>
    <property type="match status" value="1"/>
</dbReference>
<dbReference type="Gene3D" id="3.40.50.1440">
    <property type="entry name" value="Tubulin/FtsZ, GTPase domain"/>
    <property type="match status" value="1"/>
</dbReference>
<dbReference type="InterPro" id="IPR013838">
    <property type="entry name" value="Beta-tubulin_BS"/>
</dbReference>
<dbReference type="InterPro" id="IPR002453">
    <property type="entry name" value="Beta_tubulin"/>
</dbReference>
<dbReference type="InterPro" id="IPR008280">
    <property type="entry name" value="Tub_FtsZ_C"/>
</dbReference>
<dbReference type="InterPro" id="IPR000217">
    <property type="entry name" value="Tubulin"/>
</dbReference>
<dbReference type="InterPro" id="IPR037103">
    <property type="entry name" value="Tubulin/FtsZ-like_C"/>
</dbReference>
<dbReference type="InterPro" id="IPR018316">
    <property type="entry name" value="Tubulin/FtsZ_2-layer-sand-dom"/>
</dbReference>
<dbReference type="InterPro" id="IPR036525">
    <property type="entry name" value="Tubulin/FtsZ_GTPase_sf"/>
</dbReference>
<dbReference type="InterPro" id="IPR023123">
    <property type="entry name" value="Tubulin_C"/>
</dbReference>
<dbReference type="InterPro" id="IPR017975">
    <property type="entry name" value="Tubulin_CS"/>
</dbReference>
<dbReference type="InterPro" id="IPR003008">
    <property type="entry name" value="Tubulin_FtsZ_GTPase"/>
</dbReference>
<dbReference type="PANTHER" id="PTHR11588">
    <property type="entry name" value="TUBULIN"/>
    <property type="match status" value="1"/>
</dbReference>
<dbReference type="Pfam" id="PF00091">
    <property type="entry name" value="Tubulin"/>
    <property type="match status" value="1"/>
</dbReference>
<dbReference type="Pfam" id="PF03953">
    <property type="entry name" value="Tubulin_C"/>
    <property type="match status" value="1"/>
</dbReference>
<dbReference type="PRINTS" id="PR01163">
    <property type="entry name" value="BETATUBULIN"/>
</dbReference>
<dbReference type="PRINTS" id="PR01161">
    <property type="entry name" value="TUBULIN"/>
</dbReference>
<dbReference type="SMART" id="SM00864">
    <property type="entry name" value="Tubulin"/>
    <property type="match status" value="1"/>
</dbReference>
<dbReference type="SMART" id="SM00865">
    <property type="entry name" value="Tubulin_C"/>
    <property type="match status" value="1"/>
</dbReference>
<dbReference type="SUPFAM" id="SSF55307">
    <property type="entry name" value="Tubulin C-terminal domain-like"/>
    <property type="match status" value="1"/>
</dbReference>
<dbReference type="SUPFAM" id="SSF52490">
    <property type="entry name" value="Tubulin nucleotide-binding domain-like"/>
    <property type="match status" value="1"/>
</dbReference>
<dbReference type="PROSITE" id="PS00227">
    <property type="entry name" value="TUBULIN"/>
    <property type="match status" value="1"/>
</dbReference>
<dbReference type="PROSITE" id="PS00228">
    <property type="entry name" value="TUBULIN_B_AUTOREG"/>
    <property type="match status" value="1"/>
</dbReference>
<comment type="function">
    <text>Tubulin is the major constituent of microtubules, a cylinder consisting of laterally associated linear protofilaments composed of alpha- and beta-tubulin heterodimers. Microtubules grow by the addition of GTP-tubulin dimers to the microtubule end, where a stabilizing cap forms. Below the cap, tubulin dimers are in GDP-bound state, owing to GTPase activity of alpha-tubulin.</text>
</comment>
<comment type="cofactor">
    <cofactor evidence="1">
        <name>Mg(2+)</name>
        <dbReference type="ChEBI" id="CHEBI:18420"/>
    </cofactor>
</comment>
<comment type="subunit">
    <text>Dimer of alpha and beta chains. A typical microtubule is a hollow water-filled tube with an outer diameter of 25 nm and an inner diameter of 15 nM. Alpha-beta heterodimers associate head-to-tail to form protofilaments running lengthwise along the microtubule wall with the beta-tubulin subunit facing the microtubule plus end conferring a structural polarity. Microtubules usually have 13 protofilaments but different protofilament numbers can be found in some organisms and specialized cells.</text>
</comment>
<comment type="subcellular location">
    <subcellularLocation>
        <location>Cytoplasm</location>
        <location>Cytoskeleton</location>
    </subcellularLocation>
</comment>
<comment type="similarity">
    <text evidence="4">Belongs to the tubulin family.</text>
</comment>
<organism>
    <name type="scientific">Drosophila erecta</name>
    <name type="common">Fruit fly</name>
    <dbReference type="NCBI Taxonomy" id="7220"/>
    <lineage>
        <taxon>Eukaryota</taxon>
        <taxon>Metazoa</taxon>
        <taxon>Ecdysozoa</taxon>
        <taxon>Arthropoda</taxon>
        <taxon>Hexapoda</taxon>
        <taxon>Insecta</taxon>
        <taxon>Pterygota</taxon>
        <taxon>Neoptera</taxon>
        <taxon>Endopterygota</taxon>
        <taxon>Diptera</taxon>
        <taxon>Brachycera</taxon>
        <taxon>Muscomorpha</taxon>
        <taxon>Ephydroidea</taxon>
        <taxon>Drosophilidae</taxon>
        <taxon>Drosophila</taxon>
        <taxon>Sophophora</taxon>
    </lineage>
</organism>
<protein>
    <recommendedName>
        <fullName>Tubulin beta-2 chain</fullName>
    </recommendedName>
    <alternativeName>
        <fullName>Beta-2-tubulin</fullName>
    </alternativeName>
</protein>
<reference key="1">
    <citation type="journal article" date="1987" name="Mol. Cell. Biol.">
        <title>Three Drosophila beta-tubulin sequences: a developmentally regulated isoform (beta 3), the testis-specific isoform (beta 2), and an assembly-defective mutation of the testis-specific isoform (B2t8) reveal both an ancient divergence in metazoan isotypes and structural constraints for beta-tubulin function.</title>
        <authorList>
            <person name="Rudolph J.E."/>
            <person name="Kimble M."/>
            <person name="Hoyle H.D."/>
            <person name="Subler M.A."/>
            <person name="Raff E.C."/>
        </authorList>
    </citation>
    <scope>NUCLEOTIDE SEQUENCE [GENOMIC DNA]</scope>
</reference>
<proteinExistence type="inferred from homology"/>
<gene>
    <name type="primary">betaTub85D</name>
</gene>